<comment type="function">
    <text evidence="2 7 8 10">Catalyzes the hydrolysis of ATP coupled with the export of sodium and potassium from the cell (PubMed:11932440, PubMed:14617094, PubMed:19757095). May export sodium less efficiently (PubMed:11932440, PubMed:14617094). May transport other cations such as lithium (By similarity). Sodium/potassium efflux ATPases are involved in salt tolerance and maintaining the membrane potential across the plasma membrane in high salinity (Na+) or alkaline (K+) environments (PubMed:11932440).</text>
</comment>
<comment type="catalytic activity">
    <reaction evidence="2">
        <text>Na(+)(in) + ATP + H2O = Na(+)(out) + ADP + phosphate + H(+)</text>
        <dbReference type="Rhea" id="RHEA:14633"/>
        <dbReference type="ChEBI" id="CHEBI:15377"/>
        <dbReference type="ChEBI" id="CHEBI:15378"/>
        <dbReference type="ChEBI" id="CHEBI:29101"/>
        <dbReference type="ChEBI" id="CHEBI:30616"/>
        <dbReference type="ChEBI" id="CHEBI:43474"/>
        <dbReference type="ChEBI" id="CHEBI:456216"/>
        <dbReference type="EC" id="7.2.2.3"/>
    </reaction>
    <physiologicalReaction direction="left-to-right" evidence="2">
        <dbReference type="Rhea" id="RHEA:14634"/>
    </physiologicalReaction>
</comment>
<comment type="catalytic activity">
    <reaction evidence="14">
        <text>K(+)(in) + ATP + H2O = K(+)(out) + ADP + phosphate + H(+)</text>
        <dbReference type="Rhea" id="RHEA:75815"/>
        <dbReference type="ChEBI" id="CHEBI:15377"/>
        <dbReference type="ChEBI" id="CHEBI:15378"/>
        <dbReference type="ChEBI" id="CHEBI:29103"/>
        <dbReference type="ChEBI" id="CHEBI:30616"/>
        <dbReference type="ChEBI" id="CHEBI:43474"/>
        <dbReference type="ChEBI" id="CHEBI:456216"/>
    </reaction>
</comment>
<comment type="cofactor">
    <cofactor evidence="1">
        <name>Mg(2+)</name>
        <dbReference type="ChEBI" id="CHEBI:18420"/>
    </cofactor>
</comment>
<comment type="subcellular location">
    <subcellularLocation>
        <location evidence="3">Cell membrane</location>
        <topology evidence="4">Multi-pass membrane protein</topology>
    </subcellularLocation>
</comment>
<comment type="induction">
    <text evidence="6 7">Induced in conditions of high pH and in the presence of sodium and potassium ions (PubMed:10428498, PubMed:11932440). Induced by manganese ions (PubMed:10428498). May be induced by calcium ions (PubMed:10428498, PubMed:11932440).</text>
</comment>
<comment type="PTM">
    <text evidence="2">The active site is phosphorylated in presence of sodium or potassium and in conditions of higher pH. Not phosphorylated in presence of calcium ions.</text>
</comment>
<comment type="similarity">
    <text evidence="13">Belongs to the cation transport ATPase (P-type) (TC 3.A.3) family. Type IID subfamily.</text>
</comment>
<comment type="caution">
    <text evidence="7 10 11">Was originally thought to be a calcium transporter (PubMed:2145281). However later studies indicate that it functions as a sodium/potassium exporter (PubMed:11932440, PubMed:19757095).</text>
</comment>
<protein>
    <recommendedName>
        <fullName evidence="13">Sodium/potassium exporting P-type ATPase cta3</fullName>
        <ecNumber evidence="2">7.2.2.3</ecNumber>
    </recommendedName>
    <alternativeName>
        <fullName evidence="12">Cation translocating ATPase 3</fullName>
    </alternativeName>
</protein>
<keyword id="KW-0067">ATP-binding</keyword>
<keyword id="KW-1003">Cell membrane</keyword>
<keyword id="KW-0325">Glycoprotein</keyword>
<keyword id="KW-0406">Ion transport</keyword>
<keyword id="KW-0460">Magnesium</keyword>
<keyword id="KW-0472">Membrane</keyword>
<keyword id="KW-0479">Metal-binding</keyword>
<keyword id="KW-0547">Nucleotide-binding</keyword>
<keyword id="KW-0597">Phosphoprotein</keyword>
<keyword id="KW-0630">Potassium</keyword>
<keyword id="KW-0633">Potassium transport</keyword>
<keyword id="KW-1185">Reference proteome</keyword>
<keyword id="KW-0915">Sodium</keyword>
<keyword id="KW-0739">Sodium transport</keyword>
<keyword id="KW-1278">Translocase</keyword>
<keyword id="KW-0812">Transmembrane</keyword>
<keyword id="KW-1133">Transmembrane helix</keyword>
<keyword id="KW-0813">Transport</keyword>
<evidence type="ECO:0000250" key="1">
    <source>
        <dbReference type="UniProtKB" id="P04191"/>
    </source>
</evidence>
<evidence type="ECO:0000250" key="2">
    <source>
        <dbReference type="UniProtKB" id="P13587"/>
    </source>
</evidence>
<evidence type="ECO:0000250" key="3">
    <source>
        <dbReference type="UniProtKB" id="Q01896"/>
    </source>
</evidence>
<evidence type="ECO:0000255" key="4"/>
<evidence type="ECO:0000255" key="5">
    <source>
        <dbReference type="PROSITE-ProRule" id="PRU00498"/>
    </source>
</evidence>
<evidence type="ECO:0000269" key="6">
    <source>
    </source>
</evidence>
<evidence type="ECO:0000269" key="7">
    <source>
    </source>
</evidence>
<evidence type="ECO:0000269" key="8">
    <source>
    </source>
</evidence>
<evidence type="ECO:0000269" key="9">
    <source>
    </source>
</evidence>
<evidence type="ECO:0000269" key="10">
    <source>
    </source>
</evidence>
<evidence type="ECO:0000269" key="11">
    <source>
    </source>
</evidence>
<evidence type="ECO:0000303" key="12">
    <source>
    </source>
</evidence>
<evidence type="ECO:0000305" key="13"/>
<evidence type="ECO:0000305" key="14">
    <source>
    </source>
</evidence>
<sequence>MVTINISNPVYFSDIKDVESEFLTSIPNGLTHEEAQNRLSEYGENRLEADSGVSAWKVLLRQVLNAMCVVLILAAALSFGTTDWIEGGVISAIIVLNITVGFIQEYKAEKTMDSLRTLASPMAHVTRSSKTDAIDSHLLVPGDVVVLKTGDVVPADLRLVETVNFETDEALLTGESLPVIKDAHATFQMNEDVPIGDRINLAYSSSIVTKGRAKGICYATGMQTQIGAIAAGLRQKGKLFQRPEKDEPNYRRKLNKYYLKVTSYYVQRVLGLNVGTPLQRKLTVLAYILFCIAIILAIIVMAAHSFHVTNEVSIYAISLGISIIPESLIAVLSITMAMGQKNMSKRRVIVRKLEALEALGGVTDICSDKTGTITQGKMITRRVWIPSYGYLSVDTSDANNPTIGTVSGLEAAMQDVLKEKKQEMKNIDPSNQPSDQFIPLLKTCALCNLSTVNQTETGEWVVKGEPTEIALHVFSKRFNYGKEDLLKTNTFVREYPFDSEIKRMAVIYEDQQGQYTVYAKGAVERILERCSTSNGSTLEEPDRELIIAQMETLAAEGLRVLALATKVIDKADNWETLPRDVAESSLEFVSLVGIYDPPRTESKGAVELCHRAGIRVHMLTGDHPETAKAIAREVGIIPPFISDRDPNMSWMVMTGSQFDALSDEEVDSLKALCLVIARCAPQTKVKMIEALHRRKAFVAMTGDGVNDSPSLKQANVGIAMGQNGSDVAKDASDIVLTDDNFSSIVNAIEEGRRMFDNIMRFVLHLLVSNVGEVILLVVGLAFRDEVHLSVFPMSPVEILWCNMITSSFPSMGLGMELAQPDVMERLPHDNKVGIFQKSLIVDMMVYGFFLGVVSLMTWVVIMYGFGTGNLSYDCNAHYHAGCNDVFKARSAVFAVVTFCILIMAVEVKNFDNSLFNLHGIPWGEWNFRYFLHTLVENKFLAWAIALAAVSVFPTIYIPVINRDVFKHTYIGWEWGVVAVAVMFYFFYVEIWKSIRRSLTNPQKKGKFRRTLSNTITTESKLSEKDLEHRLFLQSRRA</sequence>
<proteinExistence type="evidence at protein level"/>
<gene>
    <name evidence="12" type="primary">cta3</name>
    <name type="ORF">SPBC24E9.06</name>
    <name type="ORF">SPBC839.06</name>
</gene>
<dbReference type="EC" id="7.2.2.3" evidence="2"/>
<dbReference type="EMBL" id="J05634">
    <property type="protein sequence ID" value="AAA35290.1"/>
    <property type="molecule type" value="Genomic_DNA"/>
</dbReference>
<dbReference type="EMBL" id="CU329671">
    <property type="protein sequence ID" value="CAB46699.1"/>
    <property type="molecule type" value="Genomic_DNA"/>
</dbReference>
<dbReference type="PIR" id="A36096">
    <property type="entry name" value="A36096"/>
</dbReference>
<dbReference type="RefSeq" id="NP_595246.1">
    <property type="nucleotide sequence ID" value="NM_001021152.2"/>
</dbReference>
<dbReference type="SMR" id="P22189"/>
<dbReference type="BioGRID" id="277718">
    <property type="interactions" value="10"/>
</dbReference>
<dbReference type="FunCoup" id="P22189">
    <property type="interactions" value="75"/>
</dbReference>
<dbReference type="STRING" id="284812.P22189"/>
<dbReference type="TCDB" id="3.A.3.9.2">
    <property type="family name" value="the p-type atpase (p-atpase) superfamily"/>
</dbReference>
<dbReference type="iPTMnet" id="P22189"/>
<dbReference type="PaxDb" id="4896-SPBC839.06.1"/>
<dbReference type="EnsemblFungi" id="SPBC839.06.1">
    <property type="protein sequence ID" value="SPBC839.06.1:pep"/>
    <property type="gene ID" value="SPBC839.06"/>
</dbReference>
<dbReference type="GeneID" id="2541204"/>
<dbReference type="KEGG" id="spo:2541204"/>
<dbReference type="PomBase" id="SPBC839.06">
    <property type="gene designation" value="cta3"/>
</dbReference>
<dbReference type="VEuPathDB" id="FungiDB:SPBC839.06"/>
<dbReference type="eggNOG" id="KOG0202">
    <property type="taxonomic scope" value="Eukaryota"/>
</dbReference>
<dbReference type="HOGENOM" id="CLU_002360_3_0_1"/>
<dbReference type="InParanoid" id="P22189"/>
<dbReference type="OMA" id="ISWEWAL"/>
<dbReference type="PhylomeDB" id="P22189"/>
<dbReference type="PRO" id="PR:P22189"/>
<dbReference type="Proteomes" id="UP000002485">
    <property type="component" value="Chromosome II"/>
</dbReference>
<dbReference type="GO" id="GO:0000324">
    <property type="term" value="C:fungal-type vacuole"/>
    <property type="evidence" value="ECO:0000314"/>
    <property type="project" value="PomBase"/>
</dbReference>
<dbReference type="GO" id="GO:0032178">
    <property type="term" value="C:medial membrane band"/>
    <property type="evidence" value="ECO:0000314"/>
    <property type="project" value="PomBase"/>
</dbReference>
<dbReference type="GO" id="GO:0005886">
    <property type="term" value="C:plasma membrane"/>
    <property type="evidence" value="ECO:0000314"/>
    <property type="project" value="PomBase"/>
</dbReference>
<dbReference type="GO" id="GO:0031520">
    <property type="term" value="C:plasma membrane of cell tip"/>
    <property type="evidence" value="ECO:0000314"/>
    <property type="project" value="PomBase"/>
</dbReference>
<dbReference type="GO" id="GO:0005524">
    <property type="term" value="F:ATP binding"/>
    <property type="evidence" value="ECO:0007669"/>
    <property type="project" value="UniProtKB-KW"/>
</dbReference>
<dbReference type="GO" id="GO:0016887">
    <property type="term" value="F:ATP hydrolysis activity"/>
    <property type="evidence" value="ECO:0007669"/>
    <property type="project" value="InterPro"/>
</dbReference>
<dbReference type="GO" id="GO:0046872">
    <property type="term" value="F:metal ion binding"/>
    <property type="evidence" value="ECO:0007669"/>
    <property type="project" value="UniProtKB-KW"/>
</dbReference>
<dbReference type="GO" id="GO:0005388">
    <property type="term" value="F:P-type calcium transporter activity"/>
    <property type="evidence" value="ECO:0007669"/>
    <property type="project" value="UniProtKB-EC"/>
</dbReference>
<dbReference type="GO" id="GO:0008556">
    <property type="term" value="F:P-type potassium transmembrane transporter activity"/>
    <property type="evidence" value="ECO:0000314"/>
    <property type="project" value="PomBase"/>
</dbReference>
<dbReference type="GO" id="GO:0008900">
    <property type="term" value="F:P-type potassium:proton transporter activity"/>
    <property type="evidence" value="ECO:0000314"/>
    <property type="project" value="UniProtKB"/>
</dbReference>
<dbReference type="GO" id="GO:0008554">
    <property type="term" value="F:P-type sodium transporter activity"/>
    <property type="evidence" value="ECO:0000318"/>
    <property type="project" value="GO_Central"/>
</dbReference>
<dbReference type="GO" id="GO:0006874">
    <property type="term" value="P:intracellular calcium ion homeostasis"/>
    <property type="evidence" value="ECO:0000318"/>
    <property type="project" value="GO_Central"/>
</dbReference>
<dbReference type="GO" id="GO:0034220">
    <property type="term" value="P:monoatomic ion transmembrane transport"/>
    <property type="evidence" value="ECO:0000318"/>
    <property type="project" value="GO_Central"/>
</dbReference>
<dbReference type="GO" id="GO:0097623">
    <property type="term" value="P:potassium ion export across plasma membrane"/>
    <property type="evidence" value="ECO:0000314"/>
    <property type="project" value="PomBase"/>
</dbReference>
<dbReference type="GO" id="GO:0006813">
    <property type="term" value="P:potassium ion transport"/>
    <property type="evidence" value="ECO:0000318"/>
    <property type="project" value="GO_Central"/>
</dbReference>
<dbReference type="GO" id="GO:0006814">
    <property type="term" value="P:sodium ion transport"/>
    <property type="evidence" value="ECO:0000318"/>
    <property type="project" value="GO_Central"/>
</dbReference>
<dbReference type="CDD" id="cd02086">
    <property type="entry name" value="P-type_ATPase_Na_ENA"/>
    <property type="match status" value="1"/>
</dbReference>
<dbReference type="FunFam" id="1.20.1110.10:FF:000015">
    <property type="entry name" value="Sodium ion P-type ATPase"/>
    <property type="match status" value="1"/>
</dbReference>
<dbReference type="FunFam" id="1.20.1110.10:FF:000020">
    <property type="entry name" value="Sodium ion P-type ATPase"/>
    <property type="match status" value="1"/>
</dbReference>
<dbReference type="FunFam" id="3.40.50.1000:FF:000047">
    <property type="entry name" value="Sodium P-type ATPase"/>
    <property type="match status" value="1"/>
</dbReference>
<dbReference type="Gene3D" id="3.40.1110.10">
    <property type="entry name" value="Calcium-transporting ATPase, cytoplasmic domain N"/>
    <property type="match status" value="1"/>
</dbReference>
<dbReference type="Gene3D" id="2.70.150.10">
    <property type="entry name" value="Calcium-transporting ATPase, cytoplasmic transduction domain A"/>
    <property type="match status" value="1"/>
</dbReference>
<dbReference type="Gene3D" id="1.20.1110.10">
    <property type="entry name" value="Calcium-transporting ATPase, transmembrane domain"/>
    <property type="match status" value="2"/>
</dbReference>
<dbReference type="Gene3D" id="3.40.50.1000">
    <property type="entry name" value="HAD superfamily/HAD-like"/>
    <property type="match status" value="1"/>
</dbReference>
<dbReference type="InterPro" id="IPR006068">
    <property type="entry name" value="ATPase_P-typ_cation-transptr_C"/>
</dbReference>
<dbReference type="InterPro" id="IPR004014">
    <property type="entry name" value="ATPase_P-typ_cation-transptr_N"/>
</dbReference>
<dbReference type="InterPro" id="IPR023299">
    <property type="entry name" value="ATPase_P-typ_cyto_dom_N"/>
</dbReference>
<dbReference type="InterPro" id="IPR018303">
    <property type="entry name" value="ATPase_P-typ_P_site"/>
</dbReference>
<dbReference type="InterPro" id="IPR023298">
    <property type="entry name" value="ATPase_P-typ_TM_dom_sf"/>
</dbReference>
<dbReference type="InterPro" id="IPR008250">
    <property type="entry name" value="ATPase_P-typ_transduc_dom_A_sf"/>
</dbReference>
<dbReference type="InterPro" id="IPR036412">
    <property type="entry name" value="HAD-like_sf"/>
</dbReference>
<dbReference type="InterPro" id="IPR023214">
    <property type="entry name" value="HAD_sf"/>
</dbReference>
<dbReference type="InterPro" id="IPR006414">
    <property type="entry name" value="P-type_ATPase_IID"/>
</dbReference>
<dbReference type="InterPro" id="IPR001757">
    <property type="entry name" value="P_typ_ATPase"/>
</dbReference>
<dbReference type="InterPro" id="IPR044492">
    <property type="entry name" value="P_typ_ATPase_HD_dom"/>
</dbReference>
<dbReference type="NCBIfam" id="TIGR01523">
    <property type="entry name" value="ATPase-IID_K-Na"/>
    <property type="match status" value="1"/>
</dbReference>
<dbReference type="NCBIfam" id="TIGR01494">
    <property type="entry name" value="ATPase_P-type"/>
    <property type="match status" value="3"/>
</dbReference>
<dbReference type="PANTHER" id="PTHR42861">
    <property type="entry name" value="CALCIUM-TRANSPORTING ATPASE"/>
    <property type="match status" value="1"/>
</dbReference>
<dbReference type="Pfam" id="PF13246">
    <property type="entry name" value="Cation_ATPase"/>
    <property type="match status" value="1"/>
</dbReference>
<dbReference type="Pfam" id="PF00689">
    <property type="entry name" value="Cation_ATPase_C"/>
    <property type="match status" value="1"/>
</dbReference>
<dbReference type="Pfam" id="PF00690">
    <property type="entry name" value="Cation_ATPase_N"/>
    <property type="match status" value="1"/>
</dbReference>
<dbReference type="Pfam" id="PF00122">
    <property type="entry name" value="E1-E2_ATPase"/>
    <property type="match status" value="2"/>
</dbReference>
<dbReference type="Pfam" id="PF00702">
    <property type="entry name" value="Hydrolase"/>
    <property type="match status" value="1"/>
</dbReference>
<dbReference type="PRINTS" id="PR00119">
    <property type="entry name" value="CATATPASE"/>
</dbReference>
<dbReference type="PRINTS" id="PR00120">
    <property type="entry name" value="HATPASE"/>
</dbReference>
<dbReference type="SFLD" id="SFLDS00003">
    <property type="entry name" value="Haloacid_Dehalogenase"/>
    <property type="match status" value="1"/>
</dbReference>
<dbReference type="SFLD" id="SFLDF00027">
    <property type="entry name" value="p-type_atpase"/>
    <property type="match status" value="1"/>
</dbReference>
<dbReference type="SMART" id="SM00831">
    <property type="entry name" value="Cation_ATPase_N"/>
    <property type="match status" value="1"/>
</dbReference>
<dbReference type="SUPFAM" id="SSF81653">
    <property type="entry name" value="Calcium ATPase, transduction domain A"/>
    <property type="match status" value="1"/>
</dbReference>
<dbReference type="SUPFAM" id="SSF81665">
    <property type="entry name" value="Calcium ATPase, transmembrane domain M"/>
    <property type="match status" value="1"/>
</dbReference>
<dbReference type="SUPFAM" id="SSF56784">
    <property type="entry name" value="HAD-like"/>
    <property type="match status" value="1"/>
</dbReference>
<dbReference type="SUPFAM" id="SSF81660">
    <property type="entry name" value="Metal cation-transporting ATPase, ATP-binding domain N"/>
    <property type="match status" value="1"/>
</dbReference>
<dbReference type="PROSITE" id="PS00154">
    <property type="entry name" value="ATPASE_E1_E2"/>
    <property type="match status" value="1"/>
</dbReference>
<feature type="chain" id="PRO_0000046238" description="Sodium/potassium exporting P-type ATPase cta3">
    <location>
        <begin position="1"/>
        <end position="1037"/>
    </location>
</feature>
<feature type="topological domain" description="Cytoplasmic" evidence="13">
    <location>
        <begin position="1"/>
        <end position="61"/>
    </location>
</feature>
<feature type="transmembrane region" description="Helical" evidence="4">
    <location>
        <begin position="62"/>
        <end position="82"/>
    </location>
</feature>
<feature type="topological domain" description="Extracellular" evidence="13">
    <location>
        <position position="83"/>
    </location>
</feature>
<feature type="transmembrane region" description="Helical" evidence="4">
    <location>
        <begin position="84"/>
        <end position="104"/>
    </location>
</feature>
<feature type="topological domain" description="Cytoplasmic" evidence="13">
    <location>
        <begin position="105"/>
        <end position="281"/>
    </location>
</feature>
<feature type="transmembrane region" description="Helical" evidence="4">
    <location>
        <begin position="282"/>
        <end position="302"/>
    </location>
</feature>
<feature type="topological domain" description="Extracellular" evidence="13">
    <location>
        <begin position="303"/>
        <end position="313"/>
    </location>
</feature>
<feature type="transmembrane region" description="Helical" evidence="4">
    <location>
        <begin position="314"/>
        <end position="334"/>
    </location>
</feature>
<feature type="topological domain" description="Cytoplasmic" evidence="13">
    <location>
        <begin position="335"/>
        <end position="760"/>
    </location>
</feature>
<feature type="transmembrane region" description="Helical" evidence="4">
    <location>
        <begin position="761"/>
        <end position="781"/>
    </location>
</feature>
<feature type="topological domain" description="Extracellular" evidence="13">
    <location>
        <begin position="782"/>
        <end position="787"/>
    </location>
</feature>
<feature type="transmembrane region" description="Helical" evidence="4">
    <location>
        <begin position="788"/>
        <end position="808"/>
    </location>
</feature>
<feature type="topological domain" description="Cytoplasmic" evidence="13">
    <location>
        <begin position="809"/>
        <end position="844"/>
    </location>
</feature>
<feature type="transmembrane region" description="Helical" evidence="4">
    <location>
        <begin position="845"/>
        <end position="865"/>
    </location>
</feature>
<feature type="topological domain" description="Extracellular" evidence="13">
    <location>
        <begin position="866"/>
        <end position="889"/>
    </location>
</feature>
<feature type="transmembrane region" description="Helical" evidence="4">
    <location>
        <begin position="890"/>
        <end position="910"/>
    </location>
</feature>
<feature type="topological domain" description="Cytoplasmic" evidence="13">
    <location>
        <begin position="911"/>
        <end position="939"/>
    </location>
</feature>
<feature type="transmembrane region" description="Helical" evidence="4">
    <location>
        <begin position="940"/>
        <end position="960"/>
    </location>
</feature>
<feature type="topological domain" description="Extracellular" evidence="13">
    <location>
        <begin position="961"/>
        <end position="969"/>
    </location>
</feature>
<feature type="transmembrane region" description="Helical" evidence="4">
    <location>
        <begin position="970"/>
        <end position="990"/>
    </location>
</feature>
<feature type="topological domain" description="Cytoplasmic" evidence="13">
    <location>
        <begin position="991"/>
        <end position="1037"/>
    </location>
</feature>
<feature type="active site" description="4-aspartylphosphate intermediate" evidence="1">
    <location>
        <position position="368"/>
    </location>
</feature>
<feature type="binding site" evidence="1">
    <location>
        <position position="368"/>
    </location>
    <ligand>
        <name>Mg(2+)</name>
        <dbReference type="ChEBI" id="CHEBI:18420"/>
    </ligand>
</feature>
<feature type="binding site" evidence="1">
    <location>
        <position position="370"/>
    </location>
    <ligand>
        <name>ATP</name>
        <dbReference type="ChEBI" id="CHEBI:30616"/>
    </ligand>
</feature>
<feature type="binding site" evidence="1">
    <location>
        <position position="370"/>
    </location>
    <ligand>
        <name>Mg(2+)</name>
        <dbReference type="ChEBI" id="CHEBI:18420"/>
    </ligand>
</feature>
<feature type="binding site" evidence="1">
    <location>
        <position position="468"/>
    </location>
    <ligand>
        <name>ATP</name>
        <dbReference type="ChEBI" id="CHEBI:30616"/>
    </ligand>
</feature>
<feature type="binding site" evidence="1">
    <location>
        <position position="520"/>
    </location>
    <ligand>
        <name>ATP</name>
        <dbReference type="ChEBI" id="CHEBI:30616"/>
    </ligand>
</feature>
<feature type="binding site" evidence="1">
    <location>
        <position position="559"/>
    </location>
    <ligand>
        <name>ATP</name>
        <dbReference type="ChEBI" id="CHEBI:30616"/>
    </ligand>
</feature>
<feature type="binding site" evidence="1">
    <location>
        <position position="620"/>
    </location>
    <ligand>
        <name>ATP</name>
        <dbReference type="ChEBI" id="CHEBI:30616"/>
    </ligand>
</feature>
<feature type="binding site" evidence="1">
    <location>
        <position position="621"/>
    </location>
    <ligand>
        <name>ATP</name>
        <dbReference type="ChEBI" id="CHEBI:30616"/>
    </ligand>
</feature>
<feature type="binding site" evidence="1">
    <location>
        <position position="622"/>
    </location>
    <ligand>
        <name>ATP</name>
        <dbReference type="ChEBI" id="CHEBI:30616"/>
    </ligand>
</feature>
<feature type="binding site" evidence="1">
    <location>
        <position position="678"/>
    </location>
    <ligand>
        <name>ATP</name>
        <dbReference type="ChEBI" id="CHEBI:30616"/>
    </ligand>
</feature>
<feature type="binding site" evidence="1">
    <location>
        <position position="684"/>
    </location>
    <ligand>
        <name>ATP</name>
        <dbReference type="ChEBI" id="CHEBI:30616"/>
    </ligand>
</feature>
<feature type="binding site" evidence="1">
    <location>
        <position position="703"/>
    </location>
    <ligand>
        <name>Mg(2+)</name>
        <dbReference type="ChEBI" id="CHEBI:18420"/>
    </ligand>
</feature>
<feature type="binding site" evidence="1">
    <location>
        <position position="706"/>
    </location>
    <ligand>
        <name>ATP</name>
        <dbReference type="ChEBI" id="CHEBI:30616"/>
    </ligand>
</feature>
<feature type="modified residue" description="Phosphoserine" evidence="9">
    <location>
        <position position="1012"/>
    </location>
</feature>
<feature type="glycosylation site" description="N-linked (GlcNAc...) asparagine" evidence="5">
    <location>
        <position position="869"/>
    </location>
</feature>
<reference key="1">
    <citation type="journal article" date="1990" name="J. Biol. Chem.">
        <title>Calcium homeostasis and transport are affected by disruption of cta3, a novel gene encoding Ca2(+)-ATPase in Schizosaccharomyces pombe.</title>
        <authorList>
            <person name="Ghislain M."/>
            <person name="Goffeau A."/>
            <person name="Halachmi D."/>
            <person name="Eilam Y."/>
        </authorList>
    </citation>
    <scope>NUCLEOTIDE SEQUENCE [GENOMIC DNA]</scope>
</reference>
<reference key="2">
    <citation type="journal article" date="2002" name="Nature">
        <title>The genome sequence of Schizosaccharomyces pombe.</title>
        <authorList>
            <person name="Wood V."/>
            <person name="Gwilliam R."/>
            <person name="Rajandream M.A."/>
            <person name="Lyne M.H."/>
            <person name="Lyne R."/>
            <person name="Stewart A."/>
            <person name="Sgouros J.G."/>
            <person name="Peat N."/>
            <person name="Hayles J."/>
            <person name="Baker S.G."/>
            <person name="Basham D."/>
            <person name="Bowman S."/>
            <person name="Brooks K."/>
            <person name="Brown D."/>
            <person name="Brown S."/>
            <person name="Chillingworth T."/>
            <person name="Churcher C.M."/>
            <person name="Collins M."/>
            <person name="Connor R."/>
            <person name="Cronin A."/>
            <person name="Davis P."/>
            <person name="Feltwell T."/>
            <person name="Fraser A."/>
            <person name="Gentles S."/>
            <person name="Goble A."/>
            <person name="Hamlin N."/>
            <person name="Harris D.E."/>
            <person name="Hidalgo J."/>
            <person name="Hodgson G."/>
            <person name="Holroyd S."/>
            <person name="Hornsby T."/>
            <person name="Howarth S."/>
            <person name="Huckle E.J."/>
            <person name="Hunt S."/>
            <person name="Jagels K."/>
            <person name="James K.D."/>
            <person name="Jones L."/>
            <person name="Jones M."/>
            <person name="Leather S."/>
            <person name="McDonald S."/>
            <person name="McLean J."/>
            <person name="Mooney P."/>
            <person name="Moule S."/>
            <person name="Mungall K.L."/>
            <person name="Murphy L.D."/>
            <person name="Niblett D."/>
            <person name="Odell C."/>
            <person name="Oliver K."/>
            <person name="O'Neil S."/>
            <person name="Pearson D."/>
            <person name="Quail M.A."/>
            <person name="Rabbinowitsch E."/>
            <person name="Rutherford K.M."/>
            <person name="Rutter S."/>
            <person name="Saunders D."/>
            <person name="Seeger K."/>
            <person name="Sharp S."/>
            <person name="Skelton J."/>
            <person name="Simmonds M.N."/>
            <person name="Squares R."/>
            <person name="Squares S."/>
            <person name="Stevens K."/>
            <person name="Taylor K."/>
            <person name="Taylor R.G."/>
            <person name="Tivey A."/>
            <person name="Walsh S.V."/>
            <person name="Warren T."/>
            <person name="Whitehead S."/>
            <person name="Woodward J.R."/>
            <person name="Volckaert G."/>
            <person name="Aert R."/>
            <person name="Robben J."/>
            <person name="Grymonprez B."/>
            <person name="Weltjens I."/>
            <person name="Vanstreels E."/>
            <person name="Rieger M."/>
            <person name="Schaefer M."/>
            <person name="Mueller-Auer S."/>
            <person name="Gabel C."/>
            <person name="Fuchs M."/>
            <person name="Duesterhoeft A."/>
            <person name="Fritzc C."/>
            <person name="Holzer E."/>
            <person name="Moestl D."/>
            <person name="Hilbert H."/>
            <person name="Borzym K."/>
            <person name="Langer I."/>
            <person name="Beck A."/>
            <person name="Lehrach H."/>
            <person name="Reinhardt R."/>
            <person name="Pohl T.M."/>
            <person name="Eger P."/>
            <person name="Zimmermann W."/>
            <person name="Wedler H."/>
            <person name="Wambutt R."/>
            <person name="Purnelle B."/>
            <person name="Goffeau A."/>
            <person name="Cadieu E."/>
            <person name="Dreano S."/>
            <person name="Gloux S."/>
            <person name="Lelaure V."/>
            <person name="Mottier S."/>
            <person name="Galibert F."/>
            <person name="Aves S.J."/>
            <person name="Xiang Z."/>
            <person name="Hunt C."/>
            <person name="Moore K."/>
            <person name="Hurst S.M."/>
            <person name="Lucas M."/>
            <person name="Rochet M."/>
            <person name="Gaillardin C."/>
            <person name="Tallada V.A."/>
            <person name="Garzon A."/>
            <person name="Thode G."/>
            <person name="Daga R.R."/>
            <person name="Cruzado L."/>
            <person name="Jimenez J."/>
            <person name="Sanchez M."/>
            <person name="del Rey F."/>
            <person name="Benito J."/>
            <person name="Dominguez A."/>
            <person name="Revuelta J.L."/>
            <person name="Moreno S."/>
            <person name="Armstrong J."/>
            <person name="Forsburg S.L."/>
            <person name="Cerutti L."/>
            <person name="Lowe T."/>
            <person name="McCombie W.R."/>
            <person name="Paulsen I."/>
            <person name="Potashkin J."/>
            <person name="Shpakovski G.V."/>
            <person name="Ussery D."/>
            <person name="Barrell B.G."/>
            <person name="Nurse P."/>
        </authorList>
    </citation>
    <scope>NUCLEOTIDE SEQUENCE [LARGE SCALE GENOMIC DNA]</scope>
    <source>
        <strain>972 / ATCC 24843</strain>
    </source>
</reference>
<reference key="3">
    <citation type="journal article" date="1999" name="FEBS Lett.">
        <title>The cta3+ gene that encodes a cation-transporting P-type ATPase is induced by salt stress under control of the Wis1-Sty1 MAPKK-MAPK cascade in fission yeast.</title>
        <authorList>
            <person name="Nishikawa T."/>
            <person name="Aiba H."/>
            <person name="Mizuno T."/>
        </authorList>
    </citation>
    <scope>INDUCTION</scope>
</reference>
<reference key="4">
    <citation type="journal article" date="2002" name="Microbiology">
        <title>Potassium- or sodium-efflux ATPase, a key enzyme in the evolution of fungi.</title>
        <authorList>
            <person name="Benito B."/>
            <person name="Garciadeblas B."/>
            <person name="Rodri Guez-Navarro A."/>
        </authorList>
    </citation>
    <scope>FUNCTION</scope>
    <scope>CATALYTIC ACTIVITY</scope>
    <scope>INDUCTION</scope>
</reference>
<reference key="5">
    <citation type="journal article" date="2003" name="Plant J.">
        <title>Molecular cloning and characterization of a sodium-pump ATPase of the moss Physcomitrella patens.</title>
        <authorList>
            <person name="Benito B."/>
            <person name="Rodriguez-Navarro A."/>
        </authorList>
    </citation>
    <scope>FUNCTION</scope>
</reference>
<reference key="6">
    <citation type="journal article" date="2009" name="Plant Mol. Biol.">
        <title>Role of ENA ATPase in Na(+) efflux at high pH in bryophytes.</title>
        <authorList>
            <person name="Fraile-Escanciano A."/>
            <person name="Garciadeblas B."/>
            <person name="Rodriguez-Navarro A."/>
            <person name="Benito B."/>
        </authorList>
    </citation>
    <scope>FUNCTION</scope>
</reference>
<reference key="7">
    <citation type="journal article" date="2008" name="J. Proteome Res.">
        <title>Phosphoproteome analysis of fission yeast.</title>
        <authorList>
            <person name="Wilson-Grady J.T."/>
            <person name="Villen J."/>
            <person name="Gygi S.P."/>
        </authorList>
    </citation>
    <scope>PHOSPHORYLATION [LARGE SCALE ANALYSIS] AT SER-1012</scope>
    <scope>IDENTIFICATION BY MASS SPECTROMETRY</scope>
</reference>
<accession>P22189</accession>
<name>ATN_SCHPO</name>
<organism>
    <name type="scientific">Schizosaccharomyces pombe (strain 972 / ATCC 24843)</name>
    <name type="common">Fission yeast</name>
    <dbReference type="NCBI Taxonomy" id="284812"/>
    <lineage>
        <taxon>Eukaryota</taxon>
        <taxon>Fungi</taxon>
        <taxon>Dikarya</taxon>
        <taxon>Ascomycota</taxon>
        <taxon>Taphrinomycotina</taxon>
        <taxon>Schizosaccharomycetes</taxon>
        <taxon>Schizosaccharomycetales</taxon>
        <taxon>Schizosaccharomycetaceae</taxon>
        <taxon>Schizosaccharomyces</taxon>
    </lineage>
</organism>